<organism>
    <name type="scientific">Gallus gallus</name>
    <name type="common">Chicken</name>
    <dbReference type="NCBI Taxonomy" id="9031"/>
    <lineage>
        <taxon>Eukaryota</taxon>
        <taxon>Metazoa</taxon>
        <taxon>Chordata</taxon>
        <taxon>Craniata</taxon>
        <taxon>Vertebrata</taxon>
        <taxon>Euteleostomi</taxon>
        <taxon>Archelosauria</taxon>
        <taxon>Archosauria</taxon>
        <taxon>Dinosauria</taxon>
        <taxon>Saurischia</taxon>
        <taxon>Theropoda</taxon>
        <taxon>Coelurosauria</taxon>
        <taxon>Aves</taxon>
        <taxon>Neognathae</taxon>
        <taxon>Galloanserae</taxon>
        <taxon>Galliformes</taxon>
        <taxon>Phasianidae</taxon>
        <taxon>Phasianinae</taxon>
        <taxon>Gallus</taxon>
    </lineage>
</organism>
<proteinExistence type="evidence at transcript level"/>
<dbReference type="EMBL" id="L12144">
    <property type="protein sequence ID" value="AAA51435.1"/>
    <property type="molecule type" value="mRNA"/>
</dbReference>
<dbReference type="EMBL" id="L10920">
    <property type="status" value="NOT_ANNOTATED_CDS"/>
    <property type="molecule type" value="mRNA"/>
</dbReference>
<dbReference type="PIR" id="B47222">
    <property type="entry name" value="B47222"/>
</dbReference>
<dbReference type="RefSeq" id="NP_990755.2">
    <property type="nucleotide sequence ID" value="NM_205424.2"/>
</dbReference>
<dbReference type="STRING" id="9031.ENSGALP00000053855"/>
<dbReference type="GlyCosmos" id="P33005">
    <property type="glycosylation" value="6 sites, No reported glycans"/>
</dbReference>
<dbReference type="GlyGen" id="P33005">
    <property type="glycosylation" value="7 sites"/>
</dbReference>
<dbReference type="PaxDb" id="9031-ENSGALP00000026766"/>
<dbReference type="Ensembl" id="ENSGALT00010003390.1">
    <property type="protein sequence ID" value="ENSGALP00010001833.1"/>
    <property type="gene ID" value="ENSGALG00010001468.1"/>
</dbReference>
<dbReference type="GeneID" id="396395"/>
<dbReference type="KEGG" id="gga:396395"/>
<dbReference type="CTD" id="3730"/>
<dbReference type="VEuPathDB" id="HostDB:geneid_396395"/>
<dbReference type="eggNOG" id="KOG4802">
    <property type="taxonomic scope" value="Eukaryota"/>
</dbReference>
<dbReference type="GeneTree" id="ENSGT00440000033720"/>
<dbReference type="InParanoid" id="P33005"/>
<dbReference type="OMA" id="RPHLKHH"/>
<dbReference type="OrthoDB" id="9985779at2759"/>
<dbReference type="PhylomeDB" id="P33005"/>
<dbReference type="PRO" id="PR:P33005"/>
<dbReference type="Proteomes" id="UP000000539">
    <property type="component" value="Chromosome 1"/>
</dbReference>
<dbReference type="GO" id="GO:0009986">
    <property type="term" value="C:cell surface"/>
    <property type="evidence" value="ECO:0000318"/>
    <property type="project" value="GO_Central"/>
</dbReference>
<dbReference type="GO" id="GO:0005576">
    <property type="term" value="C:extracellular region"/>
    <property type="evidence" value="ECO:0007669"/>
    <property type="project" value="InterPro"/>
</dbReference>
<dbReference type="GO" id="GO:0004867">
    <property type="term" value="F:serine-type endopeptidase inhibitor activity"/>
    <property type="evidence" value="ECO:0007669"/>
    <property type="project" value="UniProtKB-KW"/>
</dbReference>
<dbReference type="GO" id="GO:0007155">
    <property type="term" value="P:cell adhesion"/>
    <property type="evidence" value="ECO:0007669"/>
    <property type="project" value="UniProtKB-KW"/>
</dbReference>
<dbReference type="GO" id="GO:0030182">
    <property type="term" value="P:neuron differentiation"/>
    <property type="evidence" value="ECO:0000318"/>
    <property type="project" value="GO_Central"/>
</dbReference>
<dbReference type="CDD" id="cd00063">
    <property type="entry name" value="FN3"/>
    <property type="match status" value="3"/>
</dbReference>
<dbReference type="CDD" id="cd00199">
    <property type="entry name" value="WAP"/>
    <property type="match status" value="1"/>
</dbReference>
<dbReference type="FunFam" id="2.60.40.10:FF:001414">
    <property type="entry name" value="Anosmin 1"/>
    <property type="match status" value="1"/>
</dbReference>
<dbReference type="FunFam" id="2.60.40.10:FF:001783">
    <property type="entry name" value="Anosmin 1"/>
    <property type="match status" value="1"/>
</dbReference>
<dbReference type="FunFam" id="4.10.75.10:FF:000001">
    <property type="entry name" value="Anosmin 1"/>
    <property type="match status" value="1"/>
</dbReference>
<dbReference type="Gene3D" id="4.10.75.10">
    <property type="entry name" value="Elafin-like"/>
    <property type="match status" value="1"/>
</dbReference>
<dbReference type="Gene3D" id="2.60.40.10">
    <property type="entry name" value="Immunoglobulins"/>
    <property type="match status" value="3"/>
</dbReference>
<dbReference type="InterPro" id="IPR042447">
    <property type="entry name" value="Anosmin-1"/>
</dbReference>
<dbReference type="InterPro" id="IPR040957">
    <property type="entry name" value="Anosmin-1_Cys_box"/>
</dbReference>
<dbReference type="InterPro" id="IPR036645">
    <property type="entry name" value="Elafin-like_sf"/>
</dbReference>
<dbReference type="InterPro" id="IPR003961">
    <property type="entry name" value="FN3_dom"/>
</dbReference>
<dbReference type="InterPro" id="IPR036116">
    <property type="entry name" value="FN3_sf"/>
</dbReference>
<dbReference type="InterPro" id="IPR013783">
    <property type="entry name" value="Ig-like_fold"/>
</dbReference>
<dbReference type="InterPro" id="IPR008197">
    <property type="entry name" value="WAP_dom"/>
</dbReference>
<dbReference type="PANTHER" id="PTHR14131">
    <property type="entry name" value="ANOSMIN"/>
    <property type="match status" value="1"/>
</dbReference>
<dbReference type="PANTHER" id="PTHR14131:SF5">
    <property type="entry name" value="ANOSMIN-1"/>
    <property type="match status" value="1"/>
</dbReference>
<dbReference type="Pfam" id="PF17869">
    <property type="entry name" value="Cys_box"/>
    <property type="match status" value="1"/>
</dbReference>
<dbReference type="Pfam" id="PF00041">
    <property type="entry name" value="fn3"/>
    <property type="match status" value="3"/>
</dbReference>
<dbReference type="Pfam" id="PF00095">
    <property type="entry name" value="WAP"/>
    <property type="match status" value="1"/>
</dbReference>
<dbReference type="PRINTS" id="PR00003">
    <property type="entry name" value="4DISULPHCORE"/>
</dbReference>
<dbReference type="SMART" id="SM00060">
    <property type="entry name" value="FN3"/>
    <property type="match status" value="3"/>
</dbReference>
<dbReference type="SMART" id="SM00217">
    <property type="entry name" value="WAP"/>
    <property type="match status" value="1"/>
</dbReference>
<dbReference type="SUPFAM" id="SSF57256">
    <property type="entry name" value="Elafin-like"/>
    <property type="match status" value="1"/>
</dbReference>
<dbReference type="SUPFAM" id="SSF49265">
    <property type="entry name" value="Fibronectin type III"/>
    <property type="match status" value="2"/>
</dbReference>
<dbReference type="PROSITE" id="PS50853">
    <property type="entry name" value="FN3"/>
    <property type="match status" value="3"/>
</dbReference>
<dbReference type="PROSITE" id="PS51390">
    <property type="entry name" value="WAP"/>
    <property type="match status" value="1"/>
</dbReference>
<keyword id="KW-0130">Cell adhesion</keyword>
<keyword id="KW-1015">Disulfide bond</keyword>
<keyword id="KW-0325">Glycoprotein</keyword>
<keyword id="KW-0646">Protease inhibitor</keyword>
<keyword id="KW-1185">Reference proteome</keyword>
<keyword id="KW-0677">Repeat</keyword>
<keyword id="KW-0722">Serine protease inhibitor</keyword>
<keyword id="KW-0732">Signal</keyword>
<feature type="signal peptide" evidence="3">
    <location>
        <begin position="1"/>
        <end position="21"/>
    </location>
</feature>
<feature type="chain" id="PRO_0000041396" description="Anosmin-1">
    <location>
        <begin position="22"/>
        <end position="675"/>
    </location>
</feature>
<feature type="domain" description="WAP" evidence="5">
    <location>
        <begin position="121"/>
        <end position="170"/>
    </location>
</feature>
<feature type="domain" description="Fibronectin type-III 1" evidence="4">
    <location>
        <begin position="180"/>
        <end position="281"/>
    </location>
</feature>
<feature type="domain" description="Fibronectin type-III 2" evidence="4">
    <location>
        <begin position="286"/>
        <end position="392"/>
    </location>
</feature>
<feature type="domain" description="Fibronectin type-III 3" evidence="4">
    <location>
        <begin position="418"/>
        <end position="515"/>
    </location>
</feature>
<feature type="domain" description="Fibronectin type-III 4" evidence="4">
    <location>
        <begin position="545"/>
        <end position="652"/>
    </location>
</feature>
<feature type="region of interest" description="Disordered" evidence="6">
    <location>
        <begin position="388"/>
        <end position="413"/>
    </location>
</feature>
<feature type="region of interest" description="Disordered" evidence="6">
    <location>
        <begin position="654"/>
        <end position="675"/>
    </location>
</feature>
<feature type="compositionally biased region" description="Polar residues" evidence="6">
    <location>
        <begin position="388"/>
        <end position="402"/>
    </location>
</feature>
<feature type="compositionally biased region" description="Basic residues" evidence="6">
    <location>
        <begin position="656"/>
        <end position="669"/>
    </location>
</feature>
<feature type="glycosylation site" description="N-linked (GlcNAc...) asparagine" evidence="3">
    <location>
        <position position="65"/>
    </location>
</feature>
<feature type="glycosylation site" description="N-linked (GlcNAc...) asparagine" evidence="3">
    <location>
        <position position="203"/>
    </location>
</feature>
<feature type="glycosylation site" description="N-linked (GlcNAc...) asparagine" evidence="3">
    <location>
        <position position="294"/>
    </location>
</feature>
<feature type="glycosylation site" description="N-linked (GlcNAc...) asparagine" evidence="3">
    <location>
        <position position="465"/>
    </location>
</feature>
<feature type="glycosylation site" description="N-linked (GlcNAc...) asparagine" evidence="3">
    <location>
        <position position="548"/>
    </location>
</feature>
<feature type="glycosylation site" description="N-linked (GlcNAc...) asparagine" evidence="3">
    <location>
        <position position="559"/>
    </location>
</feature>
<feature type="disulfide bond" evidence="5">
    <location>
        <begin position="43"/>
        <end position="77"/>
    </location>
</feature>
<feature type="disulfide bond" evidence="5">
    <location>
        <begin position="47"/>
        <end position="71"/>
    </location>
</feature>
<feature type="disulfide bond" evidence="5">
    <location>
        <begin position="80"/>
        <end position="99"/>
    </location>
</feature>
<feature type="disulfide bond" evidence="5">
    <location>
        <begin position="84"/>
        <end position="95"/>
    </location>
</feature>
<feature type="disulfide bond" evidence="5">
    <location>
        <begin position="110"/>
        <end position="114"/>
    </location>
</feature>
<feature type="sequence conflict" description="In Ref. 1; AAA51435." evidence="8" ref="1">
    <original>R</original>
    <variation>SE</variation>
    <location>
        <position position="3"/>
    </location>
</feature>
<feature type="sequence conflict" description="In Ref. 3." evidence="8" ref="3">
    <original>S</original>
    <variation>P</variation>
    <location>
        <position position="152"/>
    </location>
</feature>
<feature type="sequence conflict" description="In Ref. 1; AAA51435." evidence="8" ref="1">
    <original>H</original>
    <variation>Y</variation>
    <location>
        <position position="528"/>
    </location>
</feature>
<gene>
    <name evidence="2" type="primary">ANOS1</name>
    <name type="synonym">KAL</name>
    <name type="synonym">KAL1</name>
</gene>
<reference key="1">
    <citation type="journal article" date="1993" name="Genomics">
        <title>Characterization of the chicken and quail homologues of the human gene responsible for the X-linked Kallmann syndrome.</title>
        <authorList>
            <person name="Legouis R."/>
            <person name="Cohen-Salmon M."/>
            <person name="del Castillo I."/>
            <person name="Levilliers J."/>
            <person name="Capy L."/>
            <person name="Mornon J.-P."/>
            <person name="Petit C."/>
        </authorList>
    </citation>
    <scope>NUCLEOTIDE SEQUENCE [MRNA]</scope>
    <source>
        <tissue>Brain</tissue>
    </source>
</reference>
<reference key="2">
    <citation type="journal article" date="1993" name="Nat. Genet.">
        <title>Expression pattern of the Kallmann syndrome gene in the olfactory system suggests a role in neuronal targeting.</title>
        <authorList>
            <person name="Rugarli E.I."/>
            <person name="Lutz B."/>
            <person name="Kuratani S.C."/>
            <person name="Wawersik S."/>
            <person name="Borsani G."/>
            <person name="Ballabio A."/>
            <person name="Eichele G."/>
        </authorList>
    </citation>
    <scope>NUCLEOTIDE SEQUENCE [MRNA]</scope>
</reference>
<reference key="3">
    <citation type="journal article" date="1993" name="Proc. Natl. Acad. Sci. U.S.A.">
        <title>Expression of the KAL gene in multiple neuronal sites during chicken development.</title>
        <authorList>
            <person name="Legouis R."/>
            <person name="Lievre C.A."/>
            <person name="Leibovici M."/>
            <person name="Lapointe F."/>
            <person name="Petit C."/>
        </authorList>
    </citation>
    <scope>NUCLEOTIDE SEQUENCE [MRNA] OF 80-236</scope>
    <scope>TISSUE SPECIFICITY</scope>
</reference>
<comment type="function">
    <text>May be an adhesion-like molecule with anti-protease activity.</text>
</comment>
<comment type="subcellular location">
    <subcellularLocation>
        <location evidence="1">Cell surface</location>
    </subcellularLocation>
</comment>
<comment type="tissue specificity">
    <text evidence="7">Mainly expressed in neurons of the central nervous system during the second half of embryonic life. Expressed in mitral neurons of the olfactory bulbs, striatal neurons, Purkinje cells of the cerebellum, retinal neurons and neurons of the brainstem and spinal cord.</text>
</comment>
<name>KALM_CHICK</name>
<sequence length="675" mass="76289">MVRRAPGASLALLLWVTAVSGSPAGPGAATARRQDEAFSTARCTSRCLSLQITRISAFFKHFQNNGSLAWCQNHKQCSKCLEPCKESWDLKKNHCQSFCEPLFPKKNYECLTSCEFLKYILSVKQGDCPAPEKASGFAAACVESCEADSECSGVKKCCSNGCGHTCQVPKNLYKGVPLKPRKELKFIELQSGDLEVKWSSKFNISIEPVIYVVQRRWNQGIHPSEDDATNWQTVAQTTDERVQLSDIRASRWYQFRVAAVNVHGTRGFTAPSKHFRSSKDPSAPPAPSNIRIANISANNDGTVNVMITWDLPEEPDIPVHHYKVFWSWTYSKYVIPAKKKRRKITDGPQNYVVLEGLQPNSNYNVELQAVTRWGQIRLKSAKVSLHFSTAQDNRNNNEQTSAGKPPKGLVDPYPTFQRRKPTRFLKIGTPFYQDNQLQVKVYWKKTDINMNQFQVHSLLESCVHNDTKGLEKVTELTYENYMILKDLSFSCKYKVTVLPAKSKSRFKAESIFFVTPSCSAFKEKTHKHINCAAEEVPVLPKVLAKPENLSASFIVQEGNITGHFSWKISKAVLHQPMTGFQVTWAEVTTESRQNSLPNSIISQSQILPADHYVLTVPNLRPSMLYRLEVQVLTTGGEGPATIKLFRTPDLPPFLPHRPHLKQHHPHHYKPPPEKY</sequence>
<accession>P33005</accession>
<accession>Q9PSH7</accession>
<protein>
    <recommendedName>
        <fullName evidence="2">Anosmin-1</fullName>
    </recommendedName>
    <alternativeName>
        <fullName evidence="2">Kallmann syndrome protein homolog</fullName>
    </alternativeName>
</protein>
<evidence type="ECO:0000250" key="1"/>
<evidence type="ECO:0000250" key="2">
    <source>
        <dbReference type="UniProtKB" id="P23352"/>
    </source>
</evidence>
<evidence type="ECO:0000255" key="3"/>
<evidence type="ECO:0000255" key="4">
    <source>
        <dbReference type="PROSITE-ProRule" id="PRU00316"/>
    </source>
</evidence>
<evidence type="ECO:0000255" key="5">
    <source>
        <dbReference type="PROSITE-ProRule" id="PRU00722"/>
    </source>
</evidence>
<evidence type="ECO:0000256" key="6">
    <source>
        <dbReference type="SAM" id="MobiDB-lite"/>
    </source>
</evidence>
<evidence type="ECO:0000269" key="7">
    <source>
    </source>
</evidence>
<evidence type="ECO:0000305" key="8"/>